<sequence>MKWKLRKSLKIANSVAFTYMVRFPDKSFYIGFKKFKTIYGKDTNWKEYNSSSKLVKEKLKDYKAKWIILQVFDSYESALKHEEMLIRKYFNNEFILNKSIGGYKFNKYPDSEEHKQKLSNAHKGKILSLKHKDKIREKLIEHYKNNSRSEAHVKNNIGSRTAKKTVSIALKSGNKFRSFKSAAKFLKCSEEQVSNHPNVIDIKITIHPVPEYVKINDNIYKSFVDAAKDLKLHPSRIKDLCLDDNYPNYIVSYKRVEK</sequence>
<protein>
    <recommendedName>
        <fullName>Intron-associated endonuclease 2</fullName>
        <ecNumber>3.1.-.-</ecNumber>
    </recommendedName>
    <alternativeName>
        <fullName>I-TevII</fullName>
    </alternativeName>
</protein>
<keyword id="KW-0255">Endonuclease</keyword>
<keyword id="KW-0378">Hydrolase</keyword>
<keyword id="KW-0404">Intron homing</keyword>
<keyword id="KW-0540">Nuclease</keyword>
<keyword id="KW-1185">Reference proteome</keyword>
<gene>
    <name type="primary">ITEVIIR</name>
</gene>
<reference key="1">
    <citation type="journal article" date="1987" name="Nucleic Acids Res.">
        <title>Nucleotide sequence and primary structures of gene products coded for by the T4 genome between map positions 48.266 kb and 39.166 kb.</title>
        <authorList>
            <person name="Tomaschewski J."/>
            <person name="Rueger W."/>
        </authorList>
    </citation>
    <scope>NUCLEOTIDE SEQUENCE [GENOMIC DNA]</scope>
    <source>
        <strain>C</strain>
    </source>
</reference>
<reference key="2">
    <citation type="journal article" date="2003" name="Microbiol. Mol. Biol. Rev.">
        <title>Bacteriophage T4 genome.</title>
        <authorList>
            <person name="Miller E.S."/>
            <person name="Kutter E."/>
            <person name="Mosig G."/>
            <person name="Arisaka F."/>
            <person name="Kunisawa T."/>
            <person name="Ruger W."/>
        </authorList>
    </citation>
    <scope>NUCLEOTIDE SEQUENCE [LARGE SCALE GENOMIC DNA]</scope>
</reference>
<proteinExistence type="predicted"/>
<accession>P07072</accession>
<accession>Q9G0D7</accession>
<evidence type="ECO:0000255" key="1">
    <source>
        <dbReference type="PROSITE-ProRule" id="PRU00977"/>
    </source>
</evidence>
<evidence type="ECO:0000305" key="2"/>
<name>TEV2_BPT4</name>
<organismHost>
    <name type="scientific">Escherichia coli</name>
    <dbReference type="NCBI Taxonomy" id="562"/>
</organismHost>
<dbReference type="EC" id="3.1.-.-"/>
<dbReference type="EMBL" id="Y00122">
    <property type="protein sequence ID" value="CAA68309.1"/>
    <property type="molecule type" value="Genomic_DNA"/>
</dbReference>
<dbReference type="EMBL" id="AF158101">
    <property type="protein sequence ID" value="AAD42522.2"/>
    <property type="molecule type" value="Genomic_DNA"/>
</dbReference>
<dbReference type="PIR" id="D29284">
    <property type="entry name" value="Z5BPT9"/>
</dbReference>
<dbReference type="SMR" id="P07072"/>
<dbReference type="REBASE" id="2624">
    <property type="entry name" value="I-TevII"/>
</dbReference>
<dbReference type="KEGG" id="vg:1258800"/>
<dbReference type="OrthoDB" id="31081at10239"/>
<dbReference type="Proteomes" id="UP000009087">
    <property type="component" value="Segment"/>
</dbReference>
<dbReference type="GO" id="GO:0003677">
    <property type="term" value="F:DNA binding"/>
    <property type="evidence" value="ECO:0007669"/>
    <property type="project" value="InterPro"/>
</dbReference>
<dbReference type="GO" id="GO:0004519">
    <property type="term" value="F:endonuclease activity"/>
    <property type="evidence" value="ECO:0007669"/>
    <property type="project" value="UniProtKB-KW"/>
</dbReference>
<dbReference type="GO" id="GO:0006314">
    <property type="term" value="P:intron homing"/>
    <property type="evidence" value="ECO:0007669"/>
    <property type="project" value="UniProtKB-KW"/>
</dbReference>
<dbReference type="InterPro" id="IPR000305">
    <property type="entry name" value="GIY-YIG_endonuc"/>
</dbReference>
<dbReference type="InterPro" id="IPR003647">
    <property type="entry name" value="Intron_nuc_1_rpt"/>
</dbReference>
<dbReference type="InterPro" id="IPR003611">
    <property type="entry name" value="NUMOD3"/>
</dbReference>
<dbReference type="SMART" id="SM00465">
    <property type="entry name" value="GIYc"/>
    <property type="match status" value="1"/>
</dbReference>
<dbReference type="SMART" id="SM00497">
    <property type="entry name" value="IENR1"/>
    <property type="match status" value="1"/>
</dbReference>
<dbReference type="SMART" id="SM00496">
    <property type="entry name" value="IENR2"/>
    <property type="match status" value="2"/>
</dbReference>
<dbReference type="PROSITE" id="PS50164">
    <property type="entry name" value="GIY_YIG"/>
    <property type="match status" value="1"/>
</dbReference>
<feature type="chain" id="PRO_0000192793" description="Intron-associated endonuclease 2">
    <location>
        <begin position="1"/>
        <end position="258"/>
    </location>
</feature>
<feature type="domain" description="GIY-YIG" evidence="1">
    <location>
        <begin position="14"/>
        <end position="96"/>
    </location>
</feature>
<feature type="sequence conflict" description="In Ref. 1; CAA68309." evidence="2" ref="1">
    <original>H</original>
    <variation>D</variation>
    <location>
        <position position="81"/>
    </location>
</feature>
<organism>
    <name type="scientific">Enterobacteria phage T4</name>
    <name type="common">Bacteriophage T4</name>
    <dbReference type="NCBI Taxonomy" id="10665"/>
    <lineage>
        <taxon>Viruses</taxon>
        <taxon>Duplodnaviria</taxon>
        <taxon>Heunggongvirae</taxon>
        <taxon>Uroviricota</taxon>
        <taxon>Caudoviricetes</taxon>
        <taxon>Straboviridae</taxon>
        <taxon>Tevenvirinae</taxon>
        <taxon>Tequatrovirus</taxon>
    </lineage>
</organism>
<comment type="function">
    <text>This endonuclease is specific to the nrdD gene splice junction and is involved in intron homing.</text>
</comment>